<protein>
    <recommendedName>
        <fullName evidence="1">ATP-dependent Clp protease ATP-binding subunit ClpX</fullName>
    </recommendedName>
</protein>
<keyword id="KW-0067">ATP-binding</keyword>
<keyword id="KW-0143">Chaperone</keyword>
<keyword id="KW-0479">Metal-binding</keyword>
<keyword id="KW-0547">Nucleotide-binding</keyword>
<keyword id="KW-0862">Zinc</keyword>
<organism>
    <name type="scientific">Geobacter sp. (strain M21)</name>
    <dbReference type="NCBI Taxonomy" id="443144"/>
    <lineage>
        <taxon>Bacteria</taxon>
        <taxon>Pseudomonadati</taxon>
        <taxon>Thermodesulfobacteriota</taxon>
        <taxon>Desulfuromonadia</taxon>
        <taxon>Geobacterales</taxon>
        <taxon>Geobacteraceae</taxon>
        <taxon>Geobacter</taxon>
    </lineage>
</organism>
<accession>C6E2S9</accession>
<proteinExistence type="inferred from homology"/>
<reference key="1">
    <citation type="submission" date="2009-07" db="EMBL/GenBank/DDBJ databases">
        <title>Complete sequence of Geobacter sp. M21.</title>
        <authorList>
            <consortium name="US DOE Joint Genome Institute"/>
            <person name="Lucas S."/>
            <person name="Copeland A."/>
            <person name="Lapidus A."/>
            <person name="Glavina del Rio T."/>
            <person name="Dalin E."/>
            <person name="Tice H."/>
            <person name="Bruce D."/>
            <person name="Goodwin L."/>
            <person name="Pitluck S."/>
            <person name="Saunders E."/>
            <person name="Brettin T."/>
            <person name="Detter J.C."/>
            <person name="Han C."/>
            <person name="Larimer F."/>
            <person name="Land M."/>
            <person name="Hauser L."/>
            <person name="Kyrpides N."/>
            <person name="Ovchinnikova G."/>
            <person name="Lovley D."/>
        </authorList>
    </citation>
    <scope>NUCLEOTIDE SEQUENCE [LARGE SCALE GENOMIC DNA]</scope>
    <source>
        <strain>M21</strain>
    </source>
</reference>
<gene>
    <name evidence="1" type="primary">clpX</name>
    <name type="ordered locus">GM21_3010</name>
</gene>
<comment type="function">
    <text evidence="1">ATP-dependent specificity component of the Clp protease. It directs the protease to specific substrates. Can perform chaperone functions in the absence of ClpP.</text>
</comment>
<comment type="subunit">
    <text evidence="1">Component of the ClpX-ClpP complex. Forms a hexameric ring that, in the presence of ATP, binds to fourteen ClpP subunits assembled into a disk-like structure with a central cavity, resembling the structure of eukaryotic proteasomes.</text>
</comment>
<comment type="similarity">
    <text evidence="1">Belongs to the ClpX chaperone family.</text>
</comment>
<dbReference type="EMBL" id="CP001661">
    <property type="protein sequence ID" value="ACT19039.1"/>
    <property type="molecule type" value="Genomic_DNA"/>
</dbReference>
<dbReference type="SMR" id="C6E2S9"/>
<dbReference type="STRING" id="443144.GM21_3010"/>
<dbReference type="KEGG" id="gem:GM21_3010"/>
<dbReference type="eggNOG" id="COG1219">
    <property type="taxonomic scope" value="Bacteria"/>
</dbReference>
<dbReference type="HOGENOM" id="CLU_014218_8_2_7"/>
<dbReference type="OrthoDB" id="9804062at2"/>
<dbReference type="GO" id="GO:0009376">
    <property type="term" value="C:HslUV protease complex"/>
    <property type="evidence" value="ECO:0007669"/>
    <property type="project" value="TreeGrafter"/>
</dbReference>
<dbReference type="GO" id="GO:0005524">
    <property type="term" value="F:ATP binding"/>
    <property type="evidence" value="ECO:0007669"/>
    <property type="project" value="UniProtKB-UniRule"/>
</dbReference>
<dbReference type="GO" id="GO:0016887">
    <property type="term" value="F:ATP hydrolysis activity"/>
    <property type="evidence" value="ECO:0007669"/>
    <property type="project" value="InterPro"/>
</dbReference>
<dbReference type="GO" id="GO:0140662">
    <property type="term" value="F:ATP-dependent protein folding chaperone"/>
    <property type="evidence" value="ECO:0007669"/>
    <property type="project" value="InterPro"/>
</dbReference>
<dbReference type="GO" id="GO:0046983">
    <property type="term" value="F:protein dimerization activity"/>
    <property type="evidence" value="ECO:0007669"/>
    <property type="project" value="InterPro"/>
</dbReference>
<dbReference type="GO" id="GO:0051082">
    <property type="term" value="F:unfolded protein binding"/>
    <property type="evidence" value="ECO:0007669"/>
    <property type="project" value="UniProtKB-UniRule"/>
</dbReference>
<dbReference type="GO" id="GO:0008270">
    <property type="term" value="F:zinc ion binding"/>
    <property type="evidence" value="ECO:0007669"/>
    <property type="project" value="InterPro"/>
</dbReference>
<dbReference type="GO" id="GO:0051301">
    <property type="term" value="P:cell division"/>
    <property type="evidence" value="ECO:0007669"/>
    <property type="project" value="TreeGrafter"/>
</dbReference>
<dbReference type="GO" id="GO:0051603">
    <property type="term" value="P:proteolysis involved in protein catabolic process"/>
    <property type="evidence" value="ECO:0007669"/>
    <property type="project" value="TreeGrafter"/>
</dbReference>
<dbReference type="CDD" id="cd19497">
    <property type="entry name" value="RecA-like_ClpX"/>
    <property type="match status" value="1"/>
</dbReference>
<dbReference type="FunFam" id="1.10.8.60:FF:000002">
    <property type="entry name" value="ATP-dependent Clp protease ATP-binding subunit ClpX"/>
    <property type="match status" value="1"/>
</dbReference>
<dbReference type="FunFam" id="3.40.50.300:FF:000005">
    <property type="entry name" value="ATP-dependent Clp protease ATP-binding subunit ClpX"/>
    <property type="match status" value="1"/>
</dbReference>
<dbReference type="Gene3D" id="1.10.8.60">
    <property type="match status" value="1"/>
</dbReference>
<dbReference type="Gene3D" id="6.20.220.10">
    <property type="entry name" value="ClpX chaperone, C4-type zinc finger domain"/>
    <property type="match status" value="1"/>
</dbReference>
<dbReference type="Gene3D" id="3.40.50.300">
    <property type="entry name" value="P-loop containing nucleotide triphosphate hydrolases"/>
    <property type="match status" value="1"/>
</dbReference>
<dbReference type="HAMAP" id="MF_00175">
    <property type="entry name" value="ClpX"/>
    <property type="match status" value="1"/>
</dbReference>
<dbReference type="InterPro" id="IPR003593">
    <property type="entry name" value="AAA+_ATPase"/>
</dbReference>
<dbReference type="InterPro" id="IPR050052">
    <property type="entry name" value="ATP-dep_Clp_protease_ClpX"/>
</dbReference>
<dbReference type="InterPro" id="IPR003959">
    <property type="entry name" value="ATPase_AAA_core"/>
</dbReference>
<dbReference type="InterPro" id="IPR019489">
    <property type="entry name" value="Clp_ATPase_C"/>
</dbReference>
<dbReference type="InterPro" id="IPR004487">
    <property type="entry name" value="Clp_protease_ATP-bd_su_ClpX"/>
</dbReference>
<dbReference type="InterPro" id="IPR046425">
    <property type="entry name" value="ClpX_bact"/>
</dbReference>
<dbReference type="InterPro" id="IPR027417">
    <property type="entry name" value="P-loop_NTPase"/>
</dbReference>
<dbReference type="InterPro" id="IPR010603">
    <property type="entry name" value="Znf_CppX_C4"/>
</dbReference>
<dbReference type="InterPro" id="IPR038366">
    <property type="entry name" value="Znf_CppX_C4_sf"/>
</dbReference>
<dbReference type="NCBIfam" id="TIGR00382">
    <property type="entry name" value="clpX"/>
    <property type="match status" value="1"/>
</dbReference>
<dbReference type="NCBIfam" id="NF003745">
    <property type="entry name" value="PRK05342.1"/>
    <property type="match status" value="1"/>
</dbReference>
<dbReference type="PANTHER" id="PTHR48102:SF7">
    <property type="entry name" value="ATP-DEPENDENT CLP PROTEASE ATP-BINDING SUBUNIT CLPX-LIKE, MITOCHONDRIAL"/>
    <property type="match status" value="1"/>
</dbReference>
<dbReference type="PANTHER" id="PTHR48102">
    <property type="entry name" value="ATP-DEPENDENT CLP PROTEASE ATP-BINDING SUBUNIT CLPX-LIKE, MITOCHONDRIAL-RELATED"/>
    <property type="match status" value="1"/>
</dbReference>
<dbReference type="Pfam" id="PF07724">
    <property type="entry name" value="AAA_2"/>
    <property type="match status" value="1"/>
</dbReference>
<dbReference type="Pfam" id="PF10431">
    <property type="entry name" value="ClpB_D2-small"/>
    <property type="match status" value="1"/>
</dbReference>
<dbReference type="Pfam" id="PF06689">
    <property type="entry name" value="zf-C4_ClpX"/>
    <property type="match status" value="1"/>
</dbReference>
<dbReference type="SMART" id="SM00382">
    <property type="entry name" value="AAA"/>
    <property type="match status" value="1"/>
</dbReference>
<dbReference type="SMART" id="SM01086">
    <property type="entry name" value="ClpB_D2-small"/>
    <property type="match status" value="1"/>
</dbReference>
<dbReference type="SMART" id="SM00994">
    <property type="entry name" value="zf-C4_ClpX"/>
    <property type="match status" value="1"/>
</dbReference>
<dbReference type="SUPFAM" id="SSF57716">
    <property type="entry name" value="Glucocorticoid receptor-like (DNA-binding domain)"/>
    <property type="match status" value="1"/>
</dbReference>
<dbReference type="SUPFAM" id="SSF52540">
    <property type="entry name" value="P-loop containing nucleoside triphosphate hydrolases"/>
    <property type="match status" value="1"/>
</dbReference>
<dbReference type="PROSITE" id="PS51902">
    <property type="entry name" value="CLPX_ZB"/>
    <property type="match status" value="1"/>
</dbReference>
<evidence type="ECO:0000255" key="1">
    <source>
        <dbReference type="HAMAP-Rule" id="MF_00175"/>
    </source>
</evidence>
<evidence type="ECO:0000255" key="2">
    <source>
        <dbReference type="PROSITE-ProRule" id="PRU01250"/>
    </source>
</evidence>
<sequence length="417" mass="45943">MSRRDDRSDTLICSFCGKSQEEVKKLIAGPTVYICDECIELCNDIIAEESKLEDATATDVRKLPKPQEIKEVLDEYVIGQSRAKKVLAVAVYNHYKRVEAAVKPGDVEMQKSNILLLGPTGSGKTLLAQTLARILKVPFAMADATNLTEAGYVGEDVENIILTLLQASDYDVEKAQKGIIYIDEIDKIARKSDSPSITRDVSGEGVQQALLKIIEGTVASVPPKGGRKHPQQEFLKVDTTNILFICGGAFPGLDSIIQQRIGVKTLGFGADVKKKVEKKAGELLAGVTPEDLLKFGFIPEFVGRLPMLASLSELDEEAMVQILKEPKNALIKQYQKLFDMEHVKLKFTDGSLVAIAREALKRKTGARGLRSILENAMLDIMYEIPSQSMVKEVVINEEVIYSKEKPIIVYENVAESA</sequence>
<name>CLPX_GEOSM</name>
<feature type="chain" id="PRO_1000203734" description="ATP-dependent Clp protease ATP-binding subunit ClpX">
    <location>
        <begin position="1"/>
        <end position="417"/>
    </location>
</feature>
<feature type="domain" description="ClpX-type ZB" evidence="2">
    <location>
        <begin position="1"/>
        <end position="54"/>
    </location>
</feature>
<feature type="binding site" evidence="2">
    <location>
        <position position="13"/>
    </location>
    <ligand>
        <name>Zn(2+)</name>
        <dbReference type="ChEBI" id="CHEBI:29105"/>
    </ligand>
</feature>
<feature type="binding site" evidence="2">
    <location>
        <position position="16"/>
    </location>
    <ligand>
        <name>Zn(2+)</name>
        <dbReference type="ChEBI" id="CHEBI:29105"/>
    </ligand>
</feature>
<feature type="binding site" evidence="2">
    <location>
        <position position="35"/>
    </location>
    <ligand>
        <name>Zn(2+)</name>
        <dbReference type="ChEBI" id="CHEBI:29105"/>
    </ligand>
</feature>
<feature type="binding site" evidence="2">
    <location>
        <position position="38"/>
    </location>
    <ligand>
        <name>Zn(2+)</name>
        <dbReference type="ChEBI" id="CHEBI:29105"/>
    </ligand>
</feature>
<feature type="binding site" evidence="1">
    <location>
        <begin position="119"/>
        <end position="126"/>
    </location>
    <ligand>
        <name>ATP</name>
        <dbReference type="ChEBI" id="CHEBI:30616"/>
    </ligand>
</feature>